<gene>
    <name evidence="1" type="primary">kdsB</name>
    <name type="ordered locus">PputGB1_1478</name>
</gene>
<reference key="1">
    <citation type="submission" date="2008-01" db="EMBL/GenBank/DDBJ databases">
        <title>Complete sequence of Pseudomonas putida GB-1.</title>
        <authorList>
            <consortium name="US DOE Joint Genome Institute"/>
            <person name="Copeland A."/>
            <person name="Lucas S."/>
            <person name="Lapidus A."/>
            <person name="Barry K."/>
            <person name="Glavina del Rio T."/>
            <person name="Dalin E."/>
            <person name="Tice H."/>
            <person name="Pitluck S."/>
            <person name="Bruce D."/>
            <person name="Goodwin L."/>
            <person name="Chertkov O."/>
            <person name="Brettin T."/>
            <person name="Detter J.C."/>
            <person name="Han C."/>
            <person name="Kuske C.R."/>
            <person name="Schmutz J."/>
            <person name="Larimer F."/>
            <person name="Land M."/>
            <person name="Hauser L."/>
            <person name="Kyrpides N."/>
            <person name="Kim E."/>
            <person name="McCarthy J.K."/>
            <person name="Richardson P."/>
        </authorList>
    </citation>
    <scope>NUCLEOTIDE SEQUENCE [LARGE SCALE GENOMIC DNA]</scope>
    <source>
        <strain>GB-1</strain>
    </source>
</reference>
<name>KDSB_PSEPG</name>
<keyword id="KW-0963">Cytoplasm</keyword>
<keyword id="KW-0448">Lipopolysaccharide biosynthesis</keyword>
<keyword id="KW-0548">Nucleotidyltransferase</keyword>
<keyword id="KW-0808">Transferase</keyword>
<accession>B0KF43</accession>
<comment type="function">
    <text evidence="1">Activates KDO (a required 8-carbon sugar) for incorporation into bacterial lipopolysaccharide in Gram-negative bacteria.</text>
</comment>
<comment type="catalytic activity">
    <reaction evidence="1">
        <text>3-deoxy-alpha-D-manno-oct-2-ulosonate + CTP = CMP-3-deoxy-beta-D-manno-octulosonate + diphosphate</text>
        <dbReference type="Rhea" id="RHEA:23448"/>
        <dbReference type="ChEBI" id="CHEBI:33019"/>
        <dbReference type="ChEBI" id="CHEBI:37563"/>
        <dbReference type="ChEBI" id="CHEBI:85986"/>
        <dbReference type="ChEBI" id="CHEBI:85987"/>
        <dbReference type="EC" id="2.7.7.38"/>
    </reaction>
</comment>
<comment type="pathway">
    <text evidence="1">Nucleotide-sugar biosynthesis; CMP-3-deoxy-D-manno-octulosonate biosynthesis; CMP-3-deoxy-D-manno-octulosonate from 3-deoxy-D-manno-octulosonate and CTP: step 1/1.</text>
</comment>
<comment type="pathway">
    <text evidence="1">Bacterial outer membrane biogenesis; lipopolysaccharide biosynthesis.</text>
</comment>
<comment type="subcellular location">
    <subcellularLocation>
        <location evidence="1">Cytoplasm</location>
    </subcellularLocation>
</comment>
<comment type="similarity">
    <text evidence="1">Belongs to the KdsB family.</text>
</comment>
<evidence type="ECO:0000255" key="1">
    <source>
        <dbReference type="HAMAP-Rule" id="MF_00057"/>
    </source>
</evidence>
<feature type="chain" id="PRO_1000074996" description="3-deoxy-manno-octulosonate cytidylyltransferase">
    <location>
        <begin position="1"/>
        <end position="254"/>
    </location>
</feature>
<dbReference type="EC" id="2.7.7.38" evidence="1"/>
<dbReference type="EMBL" id="CP000926">
    <property type="protein sequence ID" value="ABY97383.1"/>
    <property type="molecule type" value="Genomic_DNA"/>
</dbReference>
<dbReference type="RefSeq" id="WP_012271151.1">
    <property type="nucleotide sequence ID" value="NC_010322.1"/>
</dbReference>
<dbReference type="SMR" id="B0KF43"/>
<dbReference type="KEGG" id="ppg:PputGB1_1478"/>
<dbReference type="eggNOG" id="COG1212">
    <property type="taxonomic scope" value="Bacteria"/>
</dbReference>
<dbReference type="HOGENOM" id="CLU_065038_1_0_6"/>
<dbReference type="UniPathway" id="UPA00030"/>
<dbReference type="UniPathway" id="UPA00358">
    <property type="reaction ID" value="UER00476"/>
</dbReference>
<dbReference type="Proteomes" id="UP000002157">
    <property type="component" value="Chromosome"/>
</dbReference>
<dbReference type="GO" id="GO:0005829">
    <property type="term" value="C:cytosol"/>
    <property type="evidence" value="ECO:0007669"/>
    <property type="project" value="TreeGrafter"/>
</dbReference>
<dbReference type="GO" id="GO:0008690">
    <property type="term" value="F:3-deoxy-manno-octulosonate cytidylyltransferase activity"/>
    <property type="evidence" value="ECO:0007669"/>
    <property type="project" value="UniProtKB-UniRule"/>
</dbReference>
<dbReference type="GO" id="GO:0033468">
    <property type="term" value="P:CMP-keto-3-deoxy-D-manno-octulosonic acid biosynthetic process"/>
    <property type="evidence" value="ECO:0007669"/>
    <property type="project" value="UniProtKB-UniRule"/>
</dbReference>
<dbReference type="GO" id="GO:0009103">
    <property type="term" value="P:lipopolysaccharide biosynthetic process"/>
    <property type="evidence" value="ECO:0007669"/>
    <property type="project" value="UniProtKB-UniRule"/>
</dbReference>
<dbReference type="CDD" id="cd02517">
    <property type="entry name" value="CMP-KDO-Synthetase"/>
    <property type="match status" value="1"/>
</dbReference>
<dbReference type="FunFam" id="3.90.550.10:FF:000011">
    <property type="entry name" value="3-deoxy-manno-octulosonate cytidylyltransferase"/>
    <property type="match status" value="1"/>
</dbReference>
<dbReference type="Gene3D" id="3.90.550.10">
    <property type="entry name" value="Spore Coat Polysaccharide Biosynthesis Protein SpsA, Chain A"/>
    <property type="match status" value="1"/>
</dbReference>
<dbReference type="HAMAP" id="MF_00057">
    <property type="entry name" value="KdsB"/>
    <property type="match status" value="1"/>
</dbReference>
<dbReference type="InterPro" id="IPR003329">
    <property type="entry name" value="Cytidylyl_trans"/>
</dbReference>
<dbReference type="InterPro" id="IPR004528">
    <property type="entry name" value="KdsB"/>
</dbReference>
<dbReference type="InterPro" id="IPR029044">
    <property type="entry name" value="Nucleotide-diphossugar_trans"/>
</dbReference>
<dbReference type="NCBIfam" id="TIGR00466">
    <property type="entry name" value="kdsB"/>
    <property type="match status" value="1"/>
</dbReference>
<dbReference type="NCBIfam" id="NF003950">
    <property type="entry name" value="PRK05450.1-3"/>
    <property type="match status" value="1"/>
</dbReference>
<dbReference type="NCBIfam" id="NF003952">
    <property type="entry name" value="PRK05450.1-5"/>
    <property type="match status" value="1"/>
</dbReference>
<dbReference type="NCBIfam" id="NF009905">
    <property type="entry name" value="PRK13368.1"/>
    <property type="match status" value="1"/>
</dbReference>
<dbReference type="PANTHER" id="PTHR42866">
    <property type="entry name" value="3-DEOXY-MANNO-OCTULOSONATE CYTIDYLYLTRANSFERASE"/>
    <property type="match status" value="1"/>
</dbReference>
<dbReference type="PANTHER" id="PTHR42866:SF2">
    <property type="entry name" value="3-DEOXY-MANNO-OCTULOSONATE CYTIDYLYLTRANSFERASE, MITOCHONDRIAL"/>
    <property type="match status" value="1"/>
</dbReference>
<dbReference type="Pfam" id="PF02348">
    <property type="entry name" value="CTP_transf_3"/>
    <property type="match status" value="1"/>
</dbReference>
<dbReference type="SUPFAM" id="SSF53448">
    <property type="entry name" value="Nucleotide-diphospho-sugar transferases"/>
    <property type="match status" value="1"/>
</dbReference>
<organism>
    <name type="scientific">Pseudomonas putida (strain GB-1)</name>
    <dbReference type="NCBI Taxonomy" id="76869"/>
    <lineage>
        <taxon>Bacteria</taxon>
        <taxon>Pseudomonadati</taxon>
        <taxon>Pseudomonadota</taxon>
        <taxon>Gammaproteobacteria</taxon>
        <taxon>Pseudomonadales</taxon>
        <taxon>Pseudomonadaceae</taxon>
        <taxon>Pseudomonas</taxon>
    </lineage>
</organism>
<proteinExistence type="inferred from homology"/>
<protein>
    <recommendedName>
        <fullName evidence="1">3-deoxy-manno-octulosonate cytidylyltransferase</fullName>
        <ecNumber evidence="1">2.7.7.38</ecNumber>
    </recommendedName>
    <alternativeName>
        <fullName evidence="1">CMP-2-keto-3-deoxyoctulosonic acid synthase</fullName>
        <shortName evidence="1">CKS</shortName>
        <shortName evidence="1">CMP-KDO synthase</shortName>
    </alternativeName>
</protein>
<sequence>MSLNFTVVIPARLRSTRLPGKPLLPIAGKPMVQHVWEQARRSGASRVVIATDDASILEACQAFGAEVLMTRADHESGTDRLAEVVAHLGLPADAIVVNVQGDEPLIPPVIIDQVAANLAAHPEAGIATLAEPIHEPETVFNPNAVKVVSDKNGLALTFSRAPLPWARDAFAKDRNVLPEGVPYRRHIGMYAYRVGFLQDFVSWGPCWLEQTEALEQLRALWHGVRIHVEDAIEAPAVGVDTPEDLERVRRLLEA</sequence>